<gene>
    <name evidence="15" type="primary">Mecom</name>
    <name type="synonym">Evi1</name>
    <name type="synonym">Mds1</name>
    <name evidence="13" type="synonym">Prdm3</name>
</gene>
<reference key="1">
    <citation type="journal article" date="1998" name="Biochem. Biophys. Res. Commun.">
        <title>Comparative expression analysis of the antagonistic transcription factors EVI1 and MDS1-EVI1 in murine tissues and during in vitro hematopoietic differentiation.</title>
        <authorList>
            <person name="Wimmer K."/>
            <person name="Vinatzer U."/>
            <person name="Zwirn P."/>
            <person name="Fonatsch C."/>
            <person name="Wieser R."/>
        </authorList>
    </citation>
    <scope>NUCLEOTIDE SEQUENCE [MRNA] (ISOFORM 4)</scope>
</reference>
<reference key="2">
    <citation type="journal article" date="1988" name="Cell">
        <title>Retroviral activation of a novel gene encoding a zinc finger protein in IL-3-dependent myeloid leukemia cell lines.</title>
        <authorList>
            <person name="Morishita K."/>
            <person name="Parker D.S."/>
            <person name="Mucenski M.L."/>
            <person name="Jenkins N.A."/>
            <person name="Copeland N.G."/>
            <person name="Ihle J.N."/>
        </authorList>
    </citation>
    <scope>NUCLEOTIDE SEQUENCE [GENOMIC DNA] (ISOFORM 1)</scope>
</reference>
<reference key="3">
    <citation type="journal article" date="2009" name="PLoS Biol.">
        <title>Lineage-specific biology revealed by a finished genome assembly of the mouse.</title>
        <authorList>
            <person name="Church D.M."/>
            <person name="Goodstadt L."/>
            <person name="Hillier L.W."/>
            <person name="Zody M.C."/>
            <person name="Goldstein S."/>
            <person name="She X."/>
            <person name="Bult C.J."/>
            <person name="Agarwala R."/>
            <person name="Cherry J.L."/>
            <person name="DiCuccio M."/>
            <person name="Hlavina W."/>
            <person name="Kapustin Y."/>
            <person name="Meric P."/>
            <person name="Maglott D."/>
            <person name="Birtle Z."/>
            <person name="Marques A.C."/>
            <person name="Graves T."/>
            <person name="Zhou S."/>
            <person name="Teague B."/>
            <person name="Potamousis K."/>
            <person name="Churas C."/>
            <person name="Place M."/>
            <person name="Herschleb J."/>
            <person name="Runnheim R."/>
            <person name="Forrest D."/>
            <person name="Amos-Landgraf J."/>
            <person name="Schwartz D.C."/>
            <person name="Cheng Z."/>
            <person name="Lindblad-Toh K."/>
            <person name="Eichler E.E."/>
            <person name="Ponting C.P."/>
        </authorList>
    </citation>
    <scope>NUCLEOTIDE SEQUENCE [LARGE SCALE GENOMIC DNA]</scope>
    <source>
        <strain>C57BL/6J</strain>
    </source>
</reference>
<reference key="4">
    <citation type="journal article" date="1990" name="Mol. Cell. Biol.">
        <title>Identification, nuclear localization, and DNA-binding activity of the zinc finger protein encoded by the Evi-1 myeloid transforming gene.</title>
        <authorList>
            <person name="Matsugi T."/>
            <person name="Morishita K."/>
            <person name="Ihle J.N."/>
        </authorList>
    </citation>
    <scope>SUBCELLULAR LOCATION</scope>
    <scope>DNA-BINDING</scope>
    <scope>PHOSPHORYLATION</scope>
</reference>
<reference key="5">
    <citation type="journal article" date="1997" name="Mech. Dev.">
        <title>The Evi1 proto-oncogene is required at midgestation for neural, heart, and paraxial mesenchyme development.</title>
        <authorList>
            <person name="Hoyt P.R."/>
            <person name="Bartholomew C."/>
            <person name="Davis A.J."/>
            <person name="Yutzey K."/>
            <person name="Gamer L.W."/>
            <person name="Potter S.S."/>
            <person name="Ihle J.N."/>
            <person name="Mucenski M.L."/>
        </authorList>
    </citation>
    <scope>DISRUPTION PHENOTYPE</scope>
    <scope>DEVELOPMENTAL STAGE</scope>
</reference>
<reference key="6">
    <citation type="journal article" date="2005" name="EMBO J.">
        <title>Oncogenic transcription factor Evi1 regulates hematopoietic stem cell proliferation through GATA-2 expression.</title>
        <authorList>
            <person name="Yuasa H."/>
            <person name="Oike Y."/>
            <person name="Iwama A."/>
            <person name="Nishikata I."/>
            <person name="Sugiyama D."/>
            <person name="Perkins A."/>
            <person name="Mucenski M.L."/>
            <person name="Suda T."/>
            <person name="Morishita K."/>
        </authorList>
    </citation>
    <scope>FUNCTION IN CELL PROLIFERATION</scope>
    <scope>DNA-BINDING</scope>
</reference>
<reference key="7">
    <citation type="journal article" date="2008" name="FEBS Lett.">
        <title>A novel interaction between the proto-oncogene Evi1 and histone methyltransferases, SUV39H1 and G9a.</title>
        <authorList>
            <person name="Spensberger D."/>
            <person name="Delwel R."/>
        </authorList>
    </citation>
    <scope>INTERACTION WITH SUV39H1</scope>
    <scope>FUNCTION</scope>
</reference>
<reference key="8">
    <citation type="journal article" date="2009" name="Oncogene">
        <title>Pbx1 is a downstream target of Evi-1 in hematopoietic stem/progenitors and leukemic cells.</title>
        <authorList>
            <person name="Shimabe M."/>
            <person name="Goyama S."/>
            <person name="Watanabe-Okochi N."/>
            <person name="Yoshimi A."/>
            <person name="Ichikawa M."/>
            <person name="Imai Y."/>
            <person name="Kurokawa M."/>
        </authorList>
    </citation>
    <scope>FUNCTION</scope>
</reference>
<reference key="9">
    <citation type="journal article" date="2010" name="Cell">
        <title>A tissue-specific atlas of mouse protein phosphorylation and expression.</title>
        <authorList>
            <person name="Huttlin E.L."/>
            <person name="Jedrychowski M.P."/>
            <person name="Elias J.E."/>
            <person name="Goswami T."/>
            <person name="Rad R."/>
            <person name="Beausoleil S.A."/>
            <person name="Villen J."/>
            <person name="Haas W."/>
            <person name="Sowa M.E."/>
            <person name="Gygi S.P."/>
        </authorList>
    </citation>
    <scope>PHOSPHORYLATION [LARGE SCALE ANALYSIS] AT SER-626; SER-742 AND SER-1041</scope>
    <scope>IDENTIFICATION BY MASS SPECTROMETRY [LARGE SCALE ANALYSIS]</scope>
    <source>
        <tissue>Brown adipose tissue</tissue>
        <tissue>Kidney</tissue>
        <tissue>Lung</tissue>
    </source>
</reference>
<reference key="10">
    <citation type="journal article" date="2012" name="Cell">
        <title>Prdm3 and Prdm16 are H3K9me1 methyltransferases required for mammalian heterochromatin integrity.</title>
        <authorList>
            <person name="Pinheiro I."/>
            <person name="Margueron R."/>
            <person name="Shukeir N."/>
            <person name="Eisold M."/>
            <person name="Fritzsch C."/>
            <person name="Richter F.M."/>
            <person name="Mittler G."/>
            <person name="Genoud C."/>
            <person name="Goyama S."/>
            <person name="Kurokawa M."/>
            <person name="Son J."/>
            <person name="Reinberg D."/>
            <person name="Lachner M."/>
            <person name="Jenuwein T."/>
        </authorList>
    </citation>
    <scope>FUNCTION (ISOFORM 3)</scope>
    <scope>CATALYTIC ACTIVITY</scope>
</reference>
<sequence length="1232" mass="138100">MRSKGRARKLATSNECAYGNYPEIPLEEMPDADADGITSVPSLHIQEPCSPATSSESFTPKEGSPYKAPIYIPDDIPIPDEFELRESTMPGAGLGIWTKRKIEIGEKFGPYMGEQRSDLKDSSYGWEILDEFCNVKFCIDASQPDVGSWLKYIRFAGCYDQHNLVACQINDQIFYRVVADIAPGEELLLFMKSEEDPHEPMAPDIHEERQHRCEDCDQLFESKAELADHQKFPCSTPHSAFSMVEEDLQQNLESESDLREIHGNQDCKECDRVFPDLQSLEKHMLSHTEEREYKCDQCPKAFNWKSNLIRHQMSHDSGKHYECENCAKVFTDPSNLQRHIRSQHVGARAHACPECGKTFATSSGLKQHKHIHSSVKPFICEVCHKSYTQFSNLCRHKRMHADCRTQIKCKDCGQMFSTTSSLNKHRRFCEGKNHFAAGGFFGQGISLPGTPAMDKTSMVNMSHANPGLADYFGTNRHPAGLTFPTAPGFSFSFPGLFPSGLYHRPPLIPASPPVKGLSSTEQSNKCQSPLLTHPQILPATQDILKALSKHPPVGDNKPVELLPERSSEERPLEKISDQSESSDLDDVSTPSGSDLETTSGSDLESDLESDKEKCKENGKMFKDKVSPLQNLASITNKKEHNNHSVFSASVEEQSAVSGAVNDSIKAIASIAEKYFGSTGLVGLQDKKVGALPYPSMFPLPFFPAFSQSMYPFPDRDLRSLPLKMEPQSPSEVKKLQKGSSESPFDLTTKRKDEKPLTSGPSKPSGTPATSQDQPLDLSMGSRGRASGTKLTEPRKNHVFGEKKGSNMDTRPSSDGSLQHARPTPFFMDPIYRVEKRKLTDPLEALKEKYLRPSPGFLFHPQMSAIENMAEKLESFSALKPEASELLQSVPSMFSFRAPPNTLPENLLRKGKERYTCRYCGKIFPRSANLTRHLRTHTGEQPYRCKYCDRSFSISSNLQRHVRNIHNKEKPFKCHLCDRCFGQQTNLDRHLKKHENGNMSGTATSSPHSELESAGAILDDKEDAYFTEIRNFIGNSNHGSQSPRNMEERMNGSHFKDKKALATSQNSDLLDDEEVEDEVLLDEEDEDNDIPGKPRKELGVTRLDEEIPEDDYEEAGALEMSCKASPVRYKEEDYKSGLSALDHIRHFTDSLKMREMEENQYTDAELSSISSSHVPEELKQTLHRKSKSQAYAMMLSLSDKDSLHPTSHSSSNVWHSMARAAAESSAIQSISHV</sequence>
<protein>
    <recommendedName>
        <fullName evidence="14">Histone-lysine N-methyltransferase MECOM</fullName>
        <ecNumber evidence="11">2.1.1.367</ecNumber>
    </recommendedName>
    <alternativeName>
        <fullName>Ecotropic virus integration site 1 protein</fullName>
        <shortName>EVI-1</shortName>
    </alternativeName>
    <alternativeName>
        <fullName evidence="14">MDS1 and EVI1 complex locus protein</fullName>
    </alternativeName>
    <alternativeName>
        <fullName>Myelodysplasia syndrome 1 protein homolog</fullName>
    </alternativeName>
</protein>
<feature type="chain" id="PRO_0000047274" description="Histone-lysine N-methyltransferase MECOM">
    <location>
        <begin position="1"/>
        <end position="1232"/>
    </location>
</feature>
<feature type="domain" description="SET" evidence="5">
    <location>
        <begin position="80"/>
        <end position="192"/>
    </location>
</feature>
<feature type="zinc finger region" description="C2H2-type 1" evidence="4">
    <location>
        <begin position="211"/>
        <end position="238"/>
    </location>
</feature>
<feature type="zinc finger region" description="C2H2-type 2" evidence="4">
    <location>
        <begin position="265"/>
        <end position="287"/>
    </location>
</feature>
<feature type="zinc finger region" description="C2H2-type 3" evidence="4">
    <location>
        <begin position="293"/>
        <end position="315"/>
    </location>
</feature>
<feature type="zinc finger region" description="C2H2-type 4" evidence="4">
    <location>
        <begin position="321"/>
        <end position="344"/>
    </location>
</feature>
<feature type="zinc finger region" description="C2H2-type 5" evidence="4">
    <location>
        <begin position="350"/>
        <end position="372"/>
    </location>
</feature>
<feature type="zinc finger region" description="C2H2-type 6" evidence="4">
    <location>
        <begin position="378"/>
        <end position="400"/>
    </location>
</feature>
<feature type="zinc finger region" description="C2H2-type 7; atypical" evidence="4">
    <location>
        <begin position="407"/>
        <end position="429"/>
    </location>
</feature>
<feature type="zinc finger region" description="C2H2-type 8" evidence="4">
    <location>
        <begin position="914"/>
        <end position="936"/>
    </location>
</feature>
<feature type="zinc finger region" description="C2H2-type 9" evidence="4">
    <location>
        <begin position="942"/>
        <end position="965"/>
    </location>
</feature>
<feature type="zinc finger region" description="C2H2-type 10" evidence="4">
    <location>
        <begin position="971"/>
        <end position="993"/>
    </location>
</feature>
<feature type="region of interest" description="Disordered" evidence="6">
    <location>
        <begin position="22"/>
        <end position="68"/>
    </location>
</feature>
<feature type="region of interest" description="Interaction with SUV39H1 and probably MAPK9 and SMAD3" evidence="8">
    <location>
        <begin position="191"/>
        <end position="442"/>
    </location>
</feature>
<feature type="region of interest" description="Disordered" evidence="6">
    <location>
        <begin position="548"/>
        <end position="622"/>
    </location>
</feature>
<feature type="region of interest" description="Disordered" evidence="6">
    <location>
        <begin position="720"/>
        <end position="823"/>
    </location>
</feature>
<feature type="region of interest" description="Disordered" evidence="6">
    <location>
        <begin position="1032"/>
        <end position="1107"/>
    </location>
</feature>
<feature type="short sequence motif" description="Nuclear localization signal" evidence="3">
    <location>
        <begin position="611"/>
        <end position="624"/>
    </location>
</feature>
<feature type="short sequence motif" description="CTBP-binding motif 1" evidence="1">
    <location>
        <begin position="743"/>
        <end position="747"/>
    </location>
</feature>
<feature type="short sequence motif" description="CTBP-binding motif 2" evidence="1">
    <location>
        <begin position="774"/>
        <end position="778"/>
    </location>
</feature>
<feature type="compositionally biased region" description="Acidic residues" evidence="6">
    <location>
        <begin position="25"/>
        <end position="34"/>
    </location>
</feature>
<feature type="compositionally biased region" description="Basic and acidic residues" evidence="6">
    <location>
        <begin position="562"/>
        <end position="577"/>
    </location>
</feature>
<feature type="compositionally biased region" description="Polar residues" evidence="6">
    <location>
        <begin position="588"/>
        <end position="600"/>
    </location>
</feature>
<feature type="compositionally biased region" description="Basic and acidic residues" evidence="6">
    <location>
        <begin position="608"/>
        <end position="622"/>
    </location>
</feature>
<feature type="compositionally biased region" description="Polar residues" evidence="6">
    <location>
        <begin position="758"/>
        <end position="773"/>
    </location>
</feature>
<feature type="compositionally biased region" description="Basic and acidic residues" evidence="6">
    <location>
        <begin position="791"/>
        <end position="805"/>
    </location>
</feature>
<feature type="compositionally biased region" description="Polar residues" evidence="6">
    <location>
        <begin position="806"/>
        <end position="816"/>
    </location>
</feature>
<feature type="compositionally biased region" description="Polar residues" evidence="6">
    <location>
        <begin position="1032"/>
        <end position="1043"/>
    </location>
</feature>
<feature type="compositionally biased region" description="Basic and acidic residues" evidence="6">
    <location>
        <begin position="1044"/>
        <end position="1059"/>
    </location>
</feature>
<feature type="compositionally biased region" description="Acidic residues" evidence="6">
    <location>
        <begin position="1068"/>
        <end position="1088"/>
    </location>
</feature>
<feature type="compositionally biased region" description="Basic and acidic residues" evidence="6">
    <location>
        <begin position="1089"/>
        <end position="1104"/>
    </location>
</feature>
<feature type="modified residue" description="Phosphoserine" evidence="16">
    <location>
        <position position="626"/>
    </location>
</feature>
<feature type="modified residue" description="Phosphoserine" evidence="2">
    <location>
        <position position="728"/>
    </location>
</feature>
<feature type="modified residue" description="Phosphoserine" evidence="16">
    <location>
        <position position="742"/>
    </location>
</feature>
<feature type="modified residue" description="Phosphoserine" evidence="2">
    <location>
        <position position="1039"/>
    </location>
</feature>
<feature type="modified residue" description="Phosphoserine" evidence="16">
    <location>
        <position position="1041"/>
    </location>
</feature>
<feature type="cross-link" description="Glycyl lysine isopeptide (Lys-Gly) (interchain with G-Cter in SUMO2)" evidence="2">
    <location>
        <position position="101"/>
    </location>
</feature>
<feature type="cross-link" description="Glycyl lysine isopeptide (Lys-Gly) (interchain with G-Cter in SUMO2)" evidence="2">
    <location>
        <position position="192"/>
    </location>
</feature>
<feature type="cross-link" description="Glycyl lysine isopeptide (Lys-Gly) (interchain with G-Cter in SUMO2)" evidence="2">
    <location>
        <position position="294"/>
    </location>
</feature>
<feature type="cross-link" description="Glycyl lysine isopeptide (Lys-Gly) (interchain with G-Cter in SUMO2)" evidence="2">
    <location>
        <position position="369"/>
    </location>
</feature>
<feature type="cross-link" description="Glycyl lysine isopeptide (Lys-Gly) (interchain with G-Cter in SUMO2)" evidence="2">
    <location>
        <position position="376"/>
    </location>
</feature>
<feature type="cross-link" description="Glycyl lysine isopeptide (Lys-Gly) (interchain with G-Cter in SUMO2)" evidence="2">
    <location>
        <position position="432"/>
    </location>
</feature>
<feature type="cross-link" description="Glycyl lysine isopeptide (Lys-Gly) (interchain with G-Cter in SUMO2)" evidence="2">
    <location>
        <position position="525"/>
    </location>
</feature>
<feature type="cross-link" description="Glycyl lysine isopeptide (Lys-Gly) (interchain with G-Cter in SUMO2)" evidence="2">
    <location>
        <position position="545"/>
    </location>
</feature>
<feature type="cross-link" description="Glycyl lysine isopeptide (Lys-Gly) (interchain with G-Cter in SUMO2)" evidence="2">
    <location>
        <position position="549"/>
    </location>
</feature>
<feature type="cross-link" description="Glycyl lysine isopeptide (Lys-Gly) (interchain with G-Cter in SUMO2)" evidence="2">
    <location>
        <position position="557"/>
    </location>
</feature>
<feature type="cross-link" description="Glycyl lysine isopeptide (Lys-Gly) (interchain with G-Cter in SUMO2)" evidence="2">
    <location>
        <position position="624"/>
    </location>
</feature>
<feature type="cross-link" description="Glycyl lysine isopeptide (Lys-Gly) (interchain with G-Cter in SUMO2)" evidence="2">
    <location>
        <position position="637"/>
    </location>
</feature>
<feature type="cross-link" description="Glycyl lysine isopeptide (Lys-Gly) (interchain with G-Cter in SUMO2)" evidence="2">
    <location>
        <position position="665"/>
    </location>
</feature>
<feature type="cross-link" description="Glycyl lysine isopeptide (Lys-Gly) (interchain with G-Cter in SUMO2)" evidence="2">
    <location>
        <position position="687"/>
    </location>
</feature>
<feature type="cross-link" description="Glycyl lysine isopeptide (Lys-Gly) (interchain with G-Cter in SUMO2)" evidence="2">
    <location>
        <position position="723"/>
    </location>
</feature>
<feature type="cross-link" description="Glycyl lysine isopeptide (Lys-Gly) (interchain with G-Cter in SUMO2)" evidence="2">
    <location>
        <position position="733"/>
    </location>
</feature>
<feature type="cross-link" description="Glycyl lysine isopeptide (Lys-Gly) (interchain with G-Cter in SUMO2)" evidence="2">
    <location>
        <position position="734"/>
    </location>
</feature>
<feature type="cross-link" description="Glycyl lysine isopeptide (Lys-Gly) (interchain with G-Cter in SUMO2)" evidence="2">
    <location>
        <position position="737"/>
    </location>
</feature>
<feature type="cross-link" description="Glycyl lysine isopeptide (Lys-Gly) (interchain with G-Cter in SUMO2)" evidence="2">
    <location>
        <position position="751"/>
    </location>
</feature>
<feature type="cross-link" description="Glycyl lysine isopeptide (Lys-Gly) (interchain with G-Cter in SUMO2)" evidence="2">
    <location>
        <position position="754"/>
    </location>
</feature>
<feature type="cross-link" description="Glycyl lysine isopeptide (Lys-Gly) (interchain with G-Cter in SUMO2)" evidence="2">
    <location>
        <position position="762"/>
    </location>
</feature>
<feature type="cross-link" description="Glycyl lysine isopeptide (Lys-Gly) (interchain with G-Cter in SUMO2)" evidence="2">
    <location>
        <position position="789"/>
    </location>
</feature>
<feature type="cross-link" description="Glycyl lysine isopeptide (Lys-Gly) (interchain with G-Cter in SUMO2)" evidence="2">
    <location>
        <position position="802"/>
    </location>
</feature>
<feature type="cross-link" description="Glycyl lysine isopeptide (Lys-Gly) (interchain with G-Cter in SUMO2)" evidence="2">
    <location>
        <position position="803"/>
    </location>
</feature>
<feature type="cross-link" description="Glycyl lysine isopeptide (Lys-Gly) (interchain with G-Cter in SUMO2)" evidence="2">
    <location>
        <position position="837"/>
    </location>
</feature>
<feature type="cross-link" description="Glycyl lysine isopeptide (Lys-Gly) (interchain with G-Cter in SUMO2)" evidence="2">
    <location>
        <position position="846"/>
    </location>
</feature>
<feature type="cross-link" description="Glycyl lysine isopeptide (Lys-Gly) (interchain with G-Cter in SUMO2)" evidence="2">
    <location>
        <position position="848"/>
    </location>
</feature>
<feature type="cross-link" description="Glycyl lysine isopeptide (Lys-Gly) (interchain with G-Cter in SUMO2)" evidence="2">
    <location>
        <position position="879"/>
    </location>
</feature>
<feature type="cross-link" description="Glycyl lysine isopeptide (Lys-Gly) (interchain with G-Cter in SUMO2)" evidence="2">
    <location>
        <position position="1020"/>
    </location>
</feature>
<feature type="cross-link" description="Glycyl lysine isopeptide (Lys-Gly) (interchain with G-Cter in SUMO2)" evidence="2">
    <location>
        <position position="1055"/>
    </location>
</feature>
<feature type="cross-link" description="Glycyl lysine isopeptide (Lys-Gly) (interchain with G-Cter in SUMO2)" evidence="2">
    <location>
        <position position="1058"/>
    </location>
</feature>
<feature type="cross-link" description="Glycyl lysine isopeptide (Lys-Gly) (interchain with G-Cter in SUMO2)" evidence="2">
    <location>
        <position position="1122"/>
    </location>
</feature>
<feature type="cross-link" description="Glycyl lysine isopeptide (Lys-Gly) (interchain with G-Cter in SUMO2)" evidence="2">
    <location>
        <position position="1129"/>
    </location>
</feature>
<feature type="cross-link" description="Glycyl lysine isopeptide (Lys-Gly) (interchain with G-Cter in SUMO2)" evidence="2">
    <location>
        <position position="1134"/>
    </location>
</feature>
<feature type="cross-link" description="Glycyl lysine isopeptide (Lys-Gly) (interchain with G-Cter in SUMO2)" evidence="2">
    <location>
        <position position="1151"/>
    </location>
</feature>
<feature type="cross-link" description="Glycyl lysine isopeptide (Lys-Gly) (interchain with G-Cter in SUMO2)" evidence="2">
    <location>
        <position position="1178"/>
    </location>
</feature>
<feature type="cross-link" description="Glycyl lysine isopeptide (Lys-Gly) (interchain with G-Cter in SUMO2)" evidence="2">
    <location>
        <position position="1186"/>
    </location>
</feature>
<feature type="splice variant" id="VSP_059487" description="In isoform 1.">
    <location>
        <begin position="1"/>
        <end position="190"/>
    </location>
</feature>
<feature type="splice variant" id="VSP_059488" description="In isoform 4.">
    <original>IL</original>
    <variation>NR</variation>
    <location>
        <begin position="128"/>
        <end position="129"/>
    </location>
</feature>
<feature type="splice variant" id="VSP_059489" description="In isoform 4.">
    <location>
        <begin position="130"/>
        <end position="1232"/>
    </location>
</feature>
<feature type="strand" evidence="17">
    <location>
        <begin position="82"/>
        <end position="86"/>
    </location>
</feature>
<feature type="strand" evidence="17">
    <location>
        <begin position="94"/>
        <end position="100"/>
    </location>
</feature>
<feature type="strand" evidence="17">
    <location>
        <begin position="114"/>
        <end position="117"/>
    </location>
</feature>
<feature type="strand" evidence="17">
    <location>
        <begin position="123"/>
        <end position="129"/>
    </location>
</feature>
<feature type="strand" evidence="17">
    <location>
        <begin position="135"/>
        <end position="140"/>
    </location>
</feature>
<feature type="helix" evidence="17">
    <location>
        <begin position="149"/>
        <end position="152"/>
    </location>
</feature>
<feature type="strand" evidence="17">
    <location>
        <begin position="164"/>
        <end position="169"/>
    </location>
</feature>
<feature type="strand" evidence="17">
    <location>
        <begin position="172"/>
        <end position="177"/>
    </location>
</feature>
<evidence type="ECO:0000250" key="1"/>
<evidence type="ECO:0000250" key="2">
    <source>
        <dbReference type="UniProtKB" id="Q03112"/>
    </source>
</evidence>
<evidence type="ECO:0000255" key="3"/>
<evidence type="ECO:0000255" key="4">
    <source>
        <dbReference type="PROSITE-ProRule" id="PRU00042"/>
    </source>
</evidence>
<evidence type="ECO:0000255" key="5">
    <source>
        <dbReference type="PROSITE-ProRule" id="PRU00190"/>
    </source>
</evidence>
<evidence type="ECO:0000256" key="6">
    <source>
        <dbReference type="SAM" id="MobiDB-lite"/>
    </source>
</evidence>
<evidence type="ECO:0000269" key="7">
    <source>
    </source>
</evidence>
<evidence type="ECO:0000269" key="8">
    <source>
    </source>
</evidence>
<evidence type="ECO:0000269" key="9">
    <source>
    </source>
</evidence>
<evidence type="ECO:0000269" key="10">
    <source>
    </source>
</evidence>
<evidence type="ECO:0000269" key="11">
    <source>
    </source>
</evidence>
<evidence type="ECO:0000269" key="12">
    <source>
    </source>
</evidence>
<evidence type="ECO:0000303" key="13">
    <source>
    </source>
</evidence>
<evidence type="ECO:0000305" key="14"/>
<evidence type="ECO:0000312" key="15">
    <source>
        <dbReference type="MGI" id="MGI:95457"/>
    </source>
</evidence>
<evidence type="ECO:0007744" key="16">
    <source>
    </source>
</evidence>
<evidence type="ECO:0007829" key="17">
    <source>
        <dbReference type="PDB" id="6XAU"/>
    </source>
</evidence>
<accession>P14404</accession>
<accession>G3UWT0</accession>
<accession>Q9Z1L8</accession>
<name>MECOM_MOUSE</name>
<proteinExistence type="evidence at protein level"/>
<organism>
    <name type="scientific">Mus musculus</name>
    <name type="common">Mouse</name>
    <dbReference type="NCBI Taxonomy" id="10090"/>
    <lineage>
        <taxon>Eukaryota</taxon>
        <taxon>Metazoa</taxon>
        <taxon>Chordata</taxon>
        <taxon>Craniata</taxon>
        <taxon>Vertebrata</taxon>
        <taxon>Euteleostomi</taxon>
        <taxon>Mammalia</taxon>
        <taxon>Eutheria</taxon>
        <taxon>Euarchontoglires</taxon>
        <taxon>Glires</taxon>
        <taxon>Rodentia</taxon>
        <taxon>Myomorpha</taxon>
        <taxon>Muroidea</taxon>
        <taxon>Muridae</taxon>
        <taxon>Murinae</taxon>
        <taxon>Mus</taxon>
        <taxon>Mus</taxon>
    </lineage>
</organism>
<comment type="function">
    <molecule>Isoform 1</molecule>
    <text evidence="7 8 9">Functions as a transcriptional regulator binding to DNA sequences in the promoter region of target genes and regulating positively or negatively their expression. Oncogene which plays a role in development, cell proliferation and differentiation. May also play a role in apoptosis through regulation of the JNK and TGF-beta signaling. Involved in hematopoiesis.</text>
</comment>
<comment type="function">
    <molecule>Isoform 3</molecule>
    <text evidence="11">Displays histone methyltransferase activity and monomethylates 'Lys-9' of histone H3 (H3K9me1) in vitro. Probably catalyzes the monomethylation of free histone H3 in the cytoplasm which is then transported to the nucleus and incorporated into nucleosomes where SUV39H methyltransferases use it as a substrate to catalyze histone H3 'Lys-9' trimethylation. Likely to be one of the primary histone methyltransferases along with PRDM16 that direct cytoplasmic H3K9me1 methylation.</text>
</comment>
<comment type="catalytic activity">
    <reaction evidence="11">
        <text>L-lysyl(9)-[histone H3] + S-adenosyl-L-methionine = N(6)-methyl-L-lysyl(9)-[histone H3] + S-adenosyl-L-homocysteine + H(+)</text>
        <dbReference type="Rhea" id="RHEA:60280"/>
        <dbReference type="Rhea" id="RHEA-COMP:15542"/>
        <dbReference type="Rhea" id="RHEA-COMP:15546"/>
        <dbReference type="ChEBI" id="CHEBI:15378"/>
        <dbReference type="ChEBI" id="CHEBI:29969"/>
        <dbReference type="ChEBI" id="CHEBI:57856"/>
        <dbReference type="ChEBI" id="CHEBI:59789"/>
        <dbReference type="ChEBI" id="CHEBI:61929"/>
        <dbReference type="EC" id="2.1.1.367"/>
    </reaction>
</comment>
<comment type="subunit">
    <molecule>Isoform 1</molecule>
    <text evidence="2 8">Homooligomer. Interacts with CTBP1. Interacts with SMAD3 (via MH2 domain); the interaction is direct. Interacts with SMAD4; through interaction with SMAD3. Interacts with CREBBP, KAT2B and histone deacetylases. Interacts with MAPK8 and MAPK9; inhibits JNK signaling (By similarity). Interacts with SUV39H1 (via SET domain); enhances MECOM transcriptional repression activity.</text>
</comment>
<comment type="interaction">
    <interactant intactId="EBI-1994523">
        <id>P14404</id>
    </interactant>
    <interactant intactId="EBI-4288185">
        <id>P01101</id>
        <label>Fos</label>
    </interactant>
    <organismsDiffer>false</organismsDiffer>
    <experiments>2</experiments>
</comment>
<comment type="interaction">
    <interactant intactId="EBI-1994523">
        <id>P14404</id>
    </interactant>
    <interactant intactId="EBI-1994548">
        <id>Q9Z2D8</id>
        <label>Mbd3</label>
    </interactant>
    <organismsDiffer>false</organismsDiffer>
    <experiments>4</experiments>
</comment>
<comment type="interaction">
    <interactant intactId="EBI-1994523">
        <id>P14404</id>
    </interactant>
    <interactant intactId="EBI-1994598">
        <id>Q9Z2D8-1</id>
        <label>Mbd3</label>
    </interactant>
    <organismsDiffer>false</organismsDiffer>
    <experiments>5</experiments>
</comment>
<comment type="subcellular location">
    <subcellularLocation>
        <location evidence="10">Nucleus</location>
    </subcellularLocation>
    <subcellularLocation>
        <location evidence="2">Nucleus speckle</location>
    </subcellularLocation>
    <subcellularLocation>
        <location evidence="2">Cytoplasm</location>
    </subcellularLocation>
</comment>
<comment type="alternative products">
    <event type="alternative promoter"/>
    <event type="alternative splicing"/>
    <isoform>
        <id>P14404-2</id>
        <name evidence="14">3</name>
        <sequence type="displayed"/>
    </isoform>
    <isoform>
        <id>P14404-1</id>
        <name evidence="14">1</name>
        <sequence type="described" ref="VSP_059487"/>
    </isoform>
    <isoform>
        <id>P14404-3</id>
        <name evidence="14">4</name>
        <name>Mds1</name>
        <sequence type="described" ref="VSP_059488 VSP_059489"/>
    </isoform>
</comment>
<comment type="developmental stage">
    <text evidence="12">Expressed at 8.5 dpc in the anterior section of the primary head folds. Ubiquitously expressed at 9.5 dpc with higher expression in forebrain, mesenchyme of the branchial arches, nasal pits, limb buds and mesonephric ducts. Also detected at 10.5 dpc in hindbrain and lateral region of the neural tube.</text>
</comment>
<comment type="domain">
    <text evidence="1">Both zinc finger regions are required for the transcriptional activation of PBX1.</text>
</comment>
<comment type="PTM">
    <text evidence="2">May be acetylated by CREBBP and KAT2B.</text>
</comment>
<comment type="disruption phenotype">
    <text evidence="12">Mice develop until 9.5 dpc but die before 11.5 dpc. At 10.5 dpc embryos display multiple malformations associated with hypocellularity and reduced body size. Required for neural, heart and paraxial mesenchyme.</text>
</comment>
<comment type="miscellaneous">
    <molecule>Isoform 4</molecule>
    <text evidence="14">Produced by alternative promoter usage. May be due to intron retention.</text>
</comment>
<comment type="sequence caution" evidence="14">
    <conflict type="erroneous initiation">
        <sequence resource="EMBL-CDS" id="AAA40581"/>
    </conflict>
    <text>Truncated N-terminus.</text>
</comment>
<dbReference type="EC" id="2.1.1.367" evidence="11"/>
<dbReference type="EMBL" id="AJ010015">
    <property type="protein sequence ID" value="CAA08971.1"/>
    <property type="molecule type" value="mRNA"/>
</dbReference>
<dbReference type="EMBL" id="M21829">
    <property type="protein sequence ID" value="AAA40581.1"/>
    <property type="status" value="ALT_INIT"/>
    <property type="molecule type" value="Genomic_DNA"/>
</dbReference>
<dbReference type="EMBL" id="AC119995">
    <property type="status" value="NOT_ANNOTATED_CDS"/>
    <property type="molecule type" value="Genomic_DNA"/>
</dbReference>
<dbReference type="EMBL" id="AL683891">
    <property type="status" value="NOT_ANNOTATED_CDS"/>
    <property type="molecule type" value="Genomic_DNA"/>
</dbReference>
<dbReference type="EMBL" id="AL691419">
    <property type="status" value="NOT_ANNOTATED_CDS"/>
    <property type="molecule type" value="Genomic_DNA"/>
</dbReference>
<dbReference type="EMBL" id="AL772145">
    <property type="status" value="NOT_ANNOTATED_CDS"/>
    <property type="molecule type" value="Genomic_DNA"/>
</dbReference>
<dbReference type="EMBL" id="AL929377">
    <property type="status" value="NOT_ANNOTATED_CDS"/>
    <property type="molecule type" value="Genomic_DNA"/>
</dbReference>
<dbReference type="PIR" id="A31591">
    <property type="entry name" value="A31591"/>
</dbReference>
<dbReference type="RefSeq" id="NP_001357698.1">
    <molecule id="P14404-2"/>
    <property type="nucleotide sequence ID" value="NM_001370769.3"/>
</dbReference>
<dbReference type="RefSeq" id="NP_001415375.1">
    <molecule id="P14404-1"/>
    <property type="nucleotide sequence ID" value="NM_001428446.1"/>
</dbReference>
<dbReference type="RefSeq" id="NP_067417.1">
    <molecule id="P14404-3"/>
    <property type="nucleotide sequence ID" value="NM_021442.3"/>
</dbReference>
<dbReference type="PDB" id="6XAU">
    <property type="method" value="X-ray"/>
    <property type="resolution" value="1.89 A"/>
    <property type="chains" value="A=74-193"/>
</dbReference>
<dbReference type="PDBsum" id="6XAU"/>
<dbReference type="SMR" id="P14404"/>
<dbReference type="BioGRID" id="199542">
    <property type="interactions" value="4"/>
</dbReference>
<dbReference type="DIP" id="DIP-46516N"/>
<dbReference type="FunCoup" id="P14404">
    <property type="interactions" value="1882"/>
</dbReference>
<dbReference type="IntAct" id="P14404">
    <property type="interactions" value="1157"/>
</dbReference>
<dbReference type="MINT" id="P14404"/>
<dbReference type="GlyGen" id="P14404">
    <property type="glycosylation" value="2 sites"/>
</dbReference>
<dbReference type="iPTMnet" id="P14404"/>
<dbReference type="PhosphoSitePlus" id="P14404"/>
<dbReference type="PaxDb" id="10090-ENSMUSP00000103905"/>
<dbReference type="ProteomicsDB" id="275902">
    <molecule id="P14404-2"/>
</dbReference>
<dbReference type="ProteomicsDB" id="292286"/>
<dbReference type="ProteomicsDB" id="361307"/>
<dbReference type="Pumba" id="P14404"/>
<dbReference type="Antibodypedia" id="18615">
    <property type="antibodies" value="432 antibodies from 34 providers"/>
</dbReference>
<dbReference type="DNASU" id="14013"/>
<dbReference type="Ensembl" id="ENSMUST00000108270.10">
    <molecule id="P14404-1"/>
    <property type="protein sequence ID" value="ENSMUSP00000103905.4"/>
    <property type="gene ID" value="ENSMUSG00000027684.17"/>
</dbReference>
<dbReference type="GeneID" id="14013"/>
<dbReference type="KEGG" id="mmu:14013"/>
<dbReference type="UCSC" id="uc033hsp.1">
    <molecule id="P14404-2"/>
    <property type="organism name" value="mouse"/>
</dbReference>
<dbReference type="AGR" id="MGI:95457"/>
<dbReference type="CTD" id="2122"/>
<dbReference type="MGI" id="MGI:95457">
    <property type="gene designation" value="Mecom"/>
</dbReference>
<dbReference type="VEuPathDB" id="HostDB:ENSMUSG00000027684"/>
<dbReference type="eggNOG" id="KOG1721">
    <property type="taxonomic scope" value="Eukaryota"/>
</dbReference>
<dbReference type="GeneTree" id="ENSGT00940000157208"/>
<dbReference type="HOGENOM" id="CLU_006627_0_0_1"/>
<dbReference type="InParanoid" id="P14404"/>
<dbReference type="OrthoDB" id="35422at9989"/>
<dbReference type="PhylomeDB" id="P14404"/>
<dbReference type="TreeFam" id="TF315309"/>
<dbReference type="BRENDA" id="2.1.1.367">
    <property type="organism ID" value="3474"/>
</dbReference>
<dbReference type="BioGRID-ORCS" id="14013">
    <property type="hits" value="3 hits in 31 CRISPR screens"/>
</dbReference>
<dbReference type="ChiTaRS" id="Mecom">
    <property type="organism name" value="mouse"/>
</dbReference>
<dbReference type="PRO" id="PR:P14404"/>
<dbReference type="Proteomes" id="UP000000589">
    <property type="component" value="Chromosome 3"/>
</dbReference>
<dbReference type="RNAct" id="P14404">
    <property type="molecule type" value="protein"/>
</dbReference>
<dbReference type="Bgee" id="ENSMUSG00000027684">
    <property type="expression patterns" value="Expressed in urinary bladder urothelium and 236 other cell types or tissues"/>
</dbReference>
<dbReference type="ExpressionAtlas" id="P14404">
    <property type="expression patterns" value="baseline and differential"/>
</dbReference>
<dbReference type="GO" id="GO:0005737">
    <property type="term" value="C:cytoplasm"/>
    <property type="evidence" value="ECO:0007669"/>
    <property type="project" value="UniProtKB-SubCell"/>
</dbReference>
<dbReference type="GO" id="GO:0016607">
    <property type="term" value="C:nuclear speck"/>
    <property type="evidence" value="ECO:0000250"/>
    <property type="project" value="UniProtKB"/>
</dbReference>
<dbReference type="GO" id="GO:0005654">
    <property type="term" value="C:nucleoplasm"/>
    <property type="evidence" value="ECO:0000304"/>
    <property type="project" value="Reactome"/>
</dbReference>
<dbReference type="GO" id="GO:0005634">
    <property type="term" value="C:nucleus"/>
    <property type="evidence" value="ECO:0000314"/>
    <property type="project" value="UniProtKB"/>
</dbReference>
<dbReference type="GO" id="GO:0003677">
    <property type="term" value="F:DNA binding"/>
    <property type="evidence" value="ECO:0000314"/>
    <property type="project" value="UniProtKB"/>
</dbReference>
<dbReference type="GO" id="GO:0001228">
    <property type="term" value="F:DNA-binding transcription activator activity, RNA polymerase II-specific"/>
    <property type="evidence" value="ECO:0000315"/>
    <property type="project" value="NTNU_SB"/>
</dbReference>
<dbReference type="GO" id="GO:0003700">
    <property type="term" value="F:DNA-binding transcription factor activity"/>
    <property type="evidence" value="ECO:0000314"/>
    <property type="project" value="UniProtKB"/>
</dbReference>
<dbReference type="GO" id="GO:0046974">
    <property type="term" value="F:histone H3K9 methyltransferase activity"/>
    <property type="evidence" value="ECO:0000314"/>
    <property type="project" value="UniProtKB"/>
</dbReference>
<dbReference type="GO" id="GO:0140948">
    <property type="term" value="F:histone H3K9 monomethyltransferase activity"/>
    <property type="evidence" value="ECO:0007669"/>
    <property type="project" value="UniProtKB-EC"/>
</dbReference>
<dbReference type="GO" id="GO:0140947">
    <property type="term" value="F:histone H3K9me2 methyltransferase activity"/>
    <property type="evidence" value="ECO:0007669"/>
    <property type="project" value="RHEA"/>
</dbReference>
<dbReference type="GO" id="GO:0042803">
    <property type="term" value="F:protein homodimerization activity"/>
    <property type="evidence" value="ECO:0000250"/>
    <property type="project" value="UniProtKB"/>
</dbReference>
<dbReference type="GO" id="GO:0000978">
    <property type="term" value="F:RNA polymerase II cis-regulatory region sequence-specific DNA binding"/>
    <property type="evidence" value="ECO:0000314"/>
    <property type="project" value="MGI"/>
</dbReference>
<dbReference type="GO" id="GO:0000977">
    <property type="term" value="F:RNA polymerase II transcription regulatory region sequence-specific DNA binding"/>
    <property type="evidence" value="ECO:0000315"/>
    <property type="project" value="NTNU_SB"/>
</dbReference>
<dbReference type="GO" id="GO:0008270">
    <property type="term" value="F:zinc ion binding"/>
    <property type="evidence" value="ECO:0007669"/>
    <property type="project" value="UniProtKB-KW"/>
</dbReference>
<dbReference type="GO" id="GO:0006915">
    <property type="term" value="P:apoptotic process"/>
    <property type="evidence" value="ECO:0007669"/>
    <property type="project" value="UniProtKB-KW"/>
</dbReference>
<dbReference type="GO" id="GO:0035115">
    <property type="term" value="P:embryonic forelimb morphogenesis"/>
    <property type="evidence" value="ECO:0000315"/>
    <property type="project" value="MGI"/>
</dbReference>
<dbReference type="GO" id="GO:0035116">
    <property type="term" value="P:embryonic hindlimb morphogenesis"/>
    <property type="evidence" value="ECO:0000315"/>
    <property type="project" value="MGI"/>
</dbReference>
<dbReference type="GO" id="GO:0030900">
    <property type="term" value="P:forebrain development"/>
    <property type="evidence" value="ECO:0000315"/>
    <property type="project" value="MGI"/>
</dbReference>
<dbReference type="GO" id="GO:0071425">
    <property type="term" value="P:hematopoietic stem cell proliferation"/>
    <property type="evidence" value="ECO:0000315"/>
    <property type="project" value="UniProtKB"/>
</dbReference>
<dbReference type="GO" id="GO:0070828">
    <property type="term" value="P:heterochromatin organization"/>
    <property type="evidence" value="ECO:0000315"/>
    <property type="project" value="UniProtKB"/>
</dbReference>
<dbReference type="GO" id="GO:0001701">
    <property type="term" value="P:in utero embryonic development"/>
    <property type="evidence" value="ECO:0000315"/>
    <property type="project" value="MGI"/>
</dbReference>
<dbReference type="GO" id="GO:0006954">
    <property type="term" value="P:inflammatory response"/>
    <property type="evidence" value="ECO:0000315"/>
    <property type="project" value="MGI"/>
</dbReference>
<dbReference type="GO" id="GO:0098727">
    <property type="term" value="P:maintenance of cell number"/>
    <property type="evidence" value="ECO:0000316"/>
    <property type="project" value="MGI"/>
</dbReference>
<dbReference type="GO" id="GO:0032259">
    <property type="term" value="P:methylation"/>
    <property type="evidence" value="ECO:0007669"/>
    <property type="project" value="UniProtKB-KW"/>
</dbReference>
<dbReference type="GO" id="GO:0045892">
    <property type="term" value="P:negative regulation of DNA-templated transcription"/>
    <property type="evidence" value="ECO:0000314"/>
    <property type="project" value="UniProtKB"/>
</dbReference>
<dbReference type="GO" id="GO:0046329">
    <property type="term" value="P:negative regulation of JNK cascade"/>
    <property type="evidence" value="ECO:0000250"/>
    <property type="project" value="UniProtKB"/>
</dbReference>
<dbReference type="GO" id="GO:0043069">
    <property type="term" value="P:negative regulation of programmed cell death"/>
    <property type="evidence" value="ECO:0000250"/>
    <property type="project" value="UniProtKB"/>
</dbReference>
<dbReference type="GO" id="GO:0001780">
    <property type="term" value="P:neutrophil homeostasis"/>
    <property type="evidence" value="ECO:0000315"/>
    <property type="project" value="MGI"/>
</dbReference>
<dbReference type="GO" id="GO:0060039">
    <property type="term" value="P:pericardium development"/>
    <property type="evidence" value="ECO:0000315"/>
    <property type="project" value="MGI"/>
</dbReference>
<dbReference type="GO" id="GO:0090336">
    <property type="term" value="P:positive regulation of brown fat cell differentiation"/>
    <property type="evidence" value="ECO:0000315"/>
    <property type="project" value="MGI"/>
</dbReference>
<dbReference type="GO" id="GO:0045893">
    <property type="term" value="P:positive regulation of DNA-templated transcription"/>
    <property type="evidence" value="ECO:0000250"/>
    <property type="project" value="UniProtKB"/>
</dbReference>
<dbReference type="GO" id="GO:0045944">
    <property type="term" value="P:positive regulation of transcription by RNA polymerase II"/>
    <property type="evidence" value="ECO:0000314"/>
    <property type="project" value="NTNU_SB"/>
</dbReference>
<dbReference type="GO" id="GO:0009791">
    <property type="term" value="P:post-embryonic development"/>
    <property type="evidence" value="ECO:0000315"/>
    <property type="project" value="MGI"/>
</dbReference>
<dbReference type="GO" id="GO:0051726">
    <property type="term" value="P:regulation of cell cycle"/>
    <property type="evidence" value="ECO:0000250"/>
    <property type="project" value="UniProtKB"/>
</dbReference>
<dbReference type="GO" id="GO:1902033">
    <property type="term" value="P:regulation of hematopoietic stem cell proliferation"/>
    <property type="evidence" value="ECO:0000315"/>
    <property type="project" value="MGI"/>
</dbReference>
<dbReference type="GO" id="GO:0009617">
    <property type="term" value="P:response to bacterium"/>
    <property type="evidence" value="ECO:0000315"/>
    <property type="project" value="MGI"/>
</dbReference>
<dbReference type="GO" id="GO:0072197">
    <property type="term" value="P:ureter morphogenesis"/>
    <property type="evidence" value="ECO:0000316"/>
    <property type="project" value="MGI"/>
</dbReference>
<dbReference type="FunFam" id="3.30.160.60:FF:000112">
    <property type="entry name" value="Mds1 and evi1 complex locus protein"/>
    <property type="match status" value="1"/>
</dbReference>
<dbReference type="FunFam" id="3.30.160.60:FF:000126">
    <property type="entry name" value="Mds1 and evi1 complex locus protein"/>
    <property type="match status" value="1"/>
</dbReference>
<dbReference type="FunFam" id="3.30.160.60:FF:000150">
    <property type="entry name" value="Mds1 and evi1 complex locus protein"/>
    <property type="match status" value="1"/>
</dbReference>
<dbReference type="FunFam" id="3.30.160.60:FF:000159">
    <property type="entry name" value="Mds1 and evi1 complex locus protein"/>
    <property type="match status" value="1"/>
</dbReference>
<dbReference type="FunFam" id="3.30.160.60:FF:000192">
    <property type="entry name" value="Mds1 and evi1 complex locus protein"/>
    <property type="match status" value="1"/>
</dbReference>
<dbReference type="FunFam" id="2.170.270.10:FF:000025">
    <property type="entry name" value="MDS1 and EVI1 complex locus protein isoform X1"/>
    <property type="match status" value="1"/>
</dbReference>
<dbReference type="FunFam" id="3.30.160.60:FF:000929">
    <property type="entry name" value="Uncharacterized protein, isoform B"/>
    <property type="match status" value="1"/>
</dbReference>
<dbReference type="Gene3D" id="3.30.160.60">
    <property type="entry name" value="Classic Zinc Finger"/>
    <property type="match status" value="8"/>
</dbReference>
<dbReference type="Gene3D" id="2.170.270.10">
    <property type="entry name" value="SET domain"/>
    <property type="match status" value="1"/>
</dbReference>
<dbReference type="InterPro" id="IPR001214">
    <property type="entry name" value="SET_dom"/>
</dbReference>
<dbReference type="InterPro" id="IPR046341">
    <property type="entry name" value="SET_dom_sf"/>
</dbReference>
<dbReference type="InterPro" id="IPR050331">
    <property type="entry name" value="Zinc_finger"/>
</dbReference>
<dbReference type="InterPro" id="IPR036236">
    <property type="entry name" value="Znf_C2H2_sf"/>
</dbReference>
<dbReference type="InterPro" id="IPR013087">
    <property type="entry name" value="Znf_C2H2_type"/>
</dbReference>
<dbReference type="PANTHER" id="PTHR16515:SF66">
    <property type="entry name" value="C2H2-TYPE DOMAIN-CONTAINING PROTEIN"/>
    <property type="match status" value="1"/>
</dbReference>
<dbReference type="PANTHER" id="PTHR16515">
    <property type="entry name" value="PR DOMAIN ZINC FINGER PROTEIN"/>
    <property type="match status" value="1"/>
</dbReference>
<dbReference type="Pfam" id="PF21549">
    <property type="entry name" value="PRDM2_PR"/>
    <property type="match status" value="1"/>
</dbReference>
<dbReference type="Pfam" id="PF00096">
    <property type="entry name" value="zf-C2H2"/>
    <property type="match status" value="8"/>
</dbReference>
<dbReference type="Pfam" id="PF13912">
    <property type="entry name" value="zf-C2H2_6"/>
    <property type="match status" value="1"/>
</dbReference>
<dbReference type="SMART" id="SM00317">
    <property type="entry name" value="SET"/>
    <property type="match status" value="1"/>
</dbReference>
<dbReference type="SMART" id="SM00355">
    <property type="entry name" value="ZnF_C2H2"/>
    <property type="match status" value="10"/>
</dbReference>
<dbReference type="SUPFAM" id="SSF57667">
    <property type="entry name" value="beta-beta-alpha zinc fingers"/>
    <property type="match status" value="5"/>
</dbReference>
<dbReference type="SUPFAM" id="SSF82199">
    <property type="entry name" value="SET domain"/>
    <property type="match status" value="1"/>
</dbReference>
<dbReference type="PROSITE" id="PS50280">
    <property type="entry name" value="SET"/>
    <property type="match status" value="1"/>
</dbReference>
<dbReference type="PROSITE" id="PS00028">
    <property type="entry name" value="ZINC_FINGER_C2H2_1"/>
    <property type="match status" value="8"/>
</dbReference>
<dbReference type="PROSITE" id="PS50157">
    <property type="entry name" value="ZINC_FINGER_C2H2_2"/>
    <property type="match status" value="10"/>
</dbReference>
<keyword id="KW-0002">3D-structure</keyword>
<keyword id="KW-0007">Acetylation</keyword>
<keyword id="KW-0877">Alternative promoter usage</keyword>
<keyword id="KW-0025">Alternative splicing</keyword>
<keyword id="KW-0053">Apoptosis</keyword>
<keyword id="KW-0963">Cytoplasm</keyword>
<keyword id="KW-0217">Developmental protein</keyword>
<keyword id="KW-0221">Differentiation</keyword>
<keyword id="KW-0238">DNA-binding</keyword>
<keyword id="KW-1017">Isopeptide bond</keyword>
<keyword id="KW-0479">Metal-binding</keyword>
<keyword id="KW-0489">Methyltransferase</keyword>
<keyword id="KW-0539">Nucleus</keyword>
<keyword id="KW-0597">Phosphoprotein</keyword>
<keyword id="KW-1185">Reference proteome</keyword>
<keyword id="KW-0677">Repeat</keyword>
<keyword id="KW-0804">Transcription</keyword>
<keyword id="KW-0805">Transcription regulation</keyword>
<keyword id="KW-0808">Transferase</keyword>
<keyword id="KW-0832">Ubl conjugation</keyword>
<keyword id="KW-0862">Zinc</keyword>
<keyword id="KW-0863">Zinc-finger</keyword>